<protein>
    <recommendedName>
        <fullName>Mannose 6-phosphate receptor-like protein 1</fullName>
    </recommendedName>
</protein>
<organism>
    <name type="scientific">Eremothecium gossypii (strain ATCC 10895 / CBS 109.51 / FGSC 9923 / NRRL Y-1056)</name>
    <name type="common">Yeast</name>
    <name type="synonym">Ashbya gossypii</name>
    <dbReference type="NCBI Taxonomy" id="284811"/>
    <lineage>
        <taxon>Eukaryota</taxon>
        <taxon>Fungi</taxon>
        <taxon>Dikarya</taxon>
        <taxon>Ascomycota</taxon>
        <taxon>Saccharomycotina</taxon>
        <taxon>Saccharomycetes</taxon>
        <taxon>Saccharomycetales</taxon>
        <taxon>Saccharomycetaceae</taxon>
        <taxon>Eremothecium</taxon>
    </lineage>
</organism>
<dbReference type="EMBL" id="AE016817">
    <property type="protein sequence ID" value="AAS51551.1"/>
    <property type="molecule type" value="Genomic_DNA"/>
</dbReference>
<dbReference type="RefSeq" id="NP_983727.1">
    <property type="nucleotide sequence ID" value="NM_209080.1"/>
</dbReference>
<dbReference type="SMR" id="Q75BD5"/>
<dbReference type="FunCoup" id="Q75BD5">
    <property type="interactions" value="263"/>
</dbReference>
<dbReference type="STRING" id="284811.Q75BD5"/>
<dbReference type="GlyCosmos" id="Q75BD5">
    <property type="glycosylation" value="4 sites, No reported glycans"/>
</dbReference>
<dbReference type="EnsemblFungi" id="AAS51551">
    <property type="protein sequence ID" value="AAS51551"/>
    <property type="gene ID" value="AGOS_ADL369C"/>
</dbReference>
<dbReference type="GeneID" id="4619862"/>
<dbReference type="KEGG" id="ago:AGOS_ADL369C"/>
<dbReference type="eggNOG" id="KOG4504">
    <property type="taxonomic scope" value="Eukaryota"/>
</dbReference>
<dbReference type="HOGENOM" id="CLU_053195_0_0_1"/>
<dbReference type="InParanoid" id="Q75BD5"/>
<dbReference type="OMA" id="SHKSNDV"/>
<dbReference type="OrthoDB" id="4504960at2759"/>
<dbReference type="Proteomes" id="UP000000591">
    <property type="component" value="Chromosome IV"/>
</dbReference>
<dbReference type="GO" id="GO:0010008">
    <property type="term" value="C:endosome membrane"/>
    <property type="evidence" value="ECO:0007669"/>
    <property type="project" value="UniProtKB-SubCell"/>
</dbReference>
<dbReference type="GO" id="GO:0005794">
    <property type="term" value="C:Golgi apparatus"/>
    <property type="evidence" value="ECO:0007669"/>
    <property type="project" value="UniProtKB-SubCell"/>
</dbReference>
<dbReference type="GO" id="GO:0005770">
    <property type="term" value="C:late endosome"/>
    <property type="evidence" value="ECO:0000318"/>
    <property type="project" value="GO_Central"/>
</dbReference>
<dbReference type="GO" id="GO:0015031">
    <property type="term" value="P:protein transport"/>
    <property type="evidence" value="ECO:0007669"/>
    <property type="project" value="UniProtKB-KW"/>
</dbReference>
<dbReference type="GO" id="GO:0007034">
    <property type="term" value="P:vacuolar transport"/>
    <property type="evidence" value="ECO:0000318"/>
    <property type="project" value="GO_Central"/>
</dbReference>
<dbReference type="Gene3D" id="2.70.130.10">
    <property type="entry name" value="Mannose-6-phosphate receptor binding domain"/>
    <property type="match status" value="1"/>
</dbReference>
<dbReference type="InterPro" id="IPR009011">
    <property type="entry name" value="Man6P_isomerase_rcpt-bd_dom_sf"/>
</dbReference>
<dbReference type="InterPro" id="IPR044865">
    <property type="entry name" value="MRH_dom"/>
</dbReference>
<dbReference type="PANTHER" id="PTHR15071:SF0">
    <property type="entry name" value="MANNOSE 6-PHOSPHATE RECEPTOR-LIKE PROTEIN 1"/>
    <property type="match status" value="1"/>
</dbReference>
<dbReference type="PANTHER" id="PTHR15071">
    <property type="entry name" value="MANNOSE-6-PHOSPHATE RECEPTOR FAMILY MEMBER"/>
    <property type="match status" value="1"/>
</dbReference>
<dbReference type="SMART" id="SM01404">
    <property type="entry name" value="CIMR"/>
    <property type="match status" value="1"/>
</dbReference>
<dbReference type="SUPFAM" id="SSF50911">
    <property type="entry name" value="Mannose 6-phosphate receptor domain"/>
    <property type="match status" value="1"/>
</dbReference>
<dbReference type="PROSITE" id="PS51914">
    <property type="entry name" value="MRH"/>
    <property type="match status" value="1"/>
</dbReference>
<sequence length="273" mass="29567">MPTQLQRPLARLLALALLVLLARAAEDEPPFCAVRNRSTGSYIDLSPLASNVSGTPPNWLVRGWQYGANFTLGVCTSPLGDGPAAYYSDTGRRVSIGRVATTPRYTGKKLTLTYEGGDLCPNRVDRKSSLLYFVCDRDIHTIAQVSLLGVLHNCSYLFEVRSVHACAAARAAGDRSVLGIFAAILLVFAAVELARRCCAAPLRRRFRPDFPADRPRWAPAPTGWAARTRAFFARAAEPRQAIKLASSPPGHPASDMEAQNTLLDSLDVRSSGA</sequence>
<name>MRL1_EREGS</name>
<keyword id="KW-1015">Disulfide bond</keyword>
<keyword id="KW-0967">Endosome</keyword>
<keyword id="KW-0325">Glycoprotein</keyword>
<keyword id="KW-0333">Golgi apparatus</keyword>
<keyword id="KW-0472">Membrane</keyword>
<keyword id="KW-0653">Protein transport</keyword>
<keyword id="KW-1185">Reference proteome</keyword>
<keyword id="KW-0732">Signal</keyword>
<keyword id="KW-0812">Transmembrane</keyword>
<keyword id="KW-1133">Transmembrane helix</keyword>
<keyword id="KW-0813">Transport</keyword>
<accession>Q75BD5</accession>
<gene>
    <name type="primary">MRL1</name>
    <name type="ordered locus">ADL369C</name>
</gene>
<evidence type="ECO:0000250" key="1"/>
<evidence type="ECO:0000255" key="2"/>
<evidence type="ECO:0000255" key="3">
    <source>
        <dbReference type="PROSITE-ProRule" id="PRU01262"/>
    </source>
</evidence>
<evidence type="ECO:0000305" key="4"/>
<reference key="1">
    <citation type="journal article" date="2004" name="Science">
        <title>The Ashbya gossypii genome as a tool for mapping the ancient Saccharomyces cerevisiae genome.</title>
        <authorList>
            <person name="Dietrich F.S."/>
            <person name="Voegeli S."/>
            <person name="Brachat S."/>
            <person name="Lerch A."/>
            <person name="Gates K."/>
            <person name="Steiner S."/>
            <person name="Mohr C."/>
            <person name="Poehlmann R."/>
            <person name="Luedi P."/>
            <person name="Choi S."/>
            <person name="Wing R.A."/>
            <person name="Flavier A."/>
            <person name="Gaffney T.D."/>
            <person name="Philippsen P."/>
        </authorList>
    </citation>
    <scope>NUCLEOTIDE SEQUENCE [LARGE SCALE GENOMIC DNA]</scope>
    <source>
        <strain>ATCC 10895 / CBS 109.51 / FGSC 9923 / NRRL Y-1056</strain>
    </source>
</reference>
<reference key="2">
    <citation type="journal article" date="2013" name="G3 (Bethesda)">
        <title>Genomes of Ashbya fungi isolated from insects reveal four mating-type loci, numerous translocations, lack of transposons, and distinct gene duplications.</title>
        <authorList>
            <person name="Dietrich F.S."/>
            <person name="Voegeli S."/>
            <person name="Kuo S."/>
            <person name="Philippsen P."/>
        </authorList>
    </citation>
    <scope>GENOME REANNOTATION</scope>
    <source>
        <strain>ATCC 10895 / CBS 109.51 / FGSC 9923 / NRRL Y-1056</strain>
    </source>
</reference>
<comment type="function">
    <text evidence="1">Sorting receptor involved in the transport of vacuolar enzymes from the Golgi complex to the vacuole.</text>
</comment>
<comment type="subcellular location">
    <subcellularLocation>
        <location evidence="1">Golgi apparatus</location>
        <location evidence="1">trans-Golgi network membrane</location>
        <topology evidence="1">Single-pass type I membrane protein</topology>
    </subcellularLocation>
    <subcellularLocation>
        <location evidence="1">Endosome membrane</location>
        <topology evidence="1">Single-pass type I membrane protein</topology>
    </subcellularLocation>
</comment>
<comment type="similarity">
    <text evidence="4">Belongs to the MRL1/IGF2R family.</text>
</comment>
<proteinExistence type="inferred from homology"/>
<feature type="signal peptide" evidence="2">
    <location>
        <begin position="1"/>
        <end position="24"/>
    </location>
</feature>
<feature type="chain" id="PRO_0000042714" description="Mannose 6-phosphate receptor-like protein 1">
    <location>
        <begin position="25"/>
        <end position="273"/>
    </location>
</feature>
<feature type="topological domain" description="Lumenal" evidence="2">
    <location>
        <begin position="25"/>
        <end position="176"/>
    </location>
</feature>
<feature type="transmembrane region" description="Helical" evidence="2">
    <location>
        <begin position="177"/>
        <end position="194"/>
    </location>
</feature>
<feature type="topological domain" description="Cytoplasmic" evidence="2">
    <location>
        <begin position="195"/>
        <end position="273"/>
    </location>
</feature>
<feature type="domain" description="MRH" evidence="3">
    <location>
        <begin position="30"/>
        <end position="168"/>
    </location>
</feature>
<feature type="glycosylation site" description="N-linked (GlcNAc...) asparagine" evidence="2">
    <location>
        <position position="36"/>
    </location>
</feature>
<feature type="glycosylation site" description="N-linked (GlcNAc...) asparagine" evidence="2">
    <location>
        <position position="51"/>
    </location>
</feature>
<feature type="glycosylation site" description="N-linked (GlcNAc...) asparagine" evidence="2">
    <location>
        <position position="69"/>
    </location>
</feature>
<feature type="glycosylation site" description="N-linked (GlcNAc...) asparagine" evidence="2">
    <location>
        <position position="153"/>
    </location>
</feature>
<feature type="disulfide bond" evidence="3">
    <location>
        <begin position="32"/>
        <end position="75"/>
    </location>
</feature>
<feature type="disulfide bond" evidence="3">
    <location>
        <begin position="120"/>
        <end position="154"/>
    </location>
</feature>
<feature type="disulfide bond" evidence="3">
    <location>
        <begin position="135"/>
        <end position="166"/>
    </location>
</feature>